<gene>
    <name evidence="1" type="primary">mnmG</name>
    <name evidence="1" type="synonym">gidA</name>
    <name type="ordered locus">Pput_5306</name>
</gene>
<feature type="chain" id="PRO_1000016648" description="tRNA uridine 5-carboxymethylaminomethyl modification enzyme MnmG">
    <location>
        <begin position="1"/>
        <end position="630"/>
    </location>
</feature>
<feature type="binding site" evidence="1">
    <location>
        <begin position="13"/>
        <end position="18"/>
    </location>
    <ligand>
        <name>FAD</name>
        <dbReference type="ChEBI" id="CHEBI:57692"/>
    </ligand>
</feature>
<feature type="binding site" evidence="1">
    <location>
        <begin position="273"/>
        <end position="287"/>
    </location>
    <ligand>
        <name>NAD(+)</name>
        <dbReference type="ChEBI" id="CHEBI:57540"/>
    </ligand>
</feature>
<accession>A5WBB4</accession>
<keyword id="KW-0963">Cytoplasm</keyword>
<keyword id="KW-0274">FAD</keyword>
<keyword id="KW-0285">Flavoprotein</keyword>
<keyword id="KW-0520">NAD</keyword>
<keyword id="KW-0819">tRNA processing</keyword>
<protein>
    <recommendedName>
        <fullName evidence="1">tRNA uridine 5-carboxymethylaminomethyl modification enzyme MnmG</fullName>
    </recommendedName>
    <alternativeName>
        <fullName evidence="1">Glucose-inhibited division protein A</fullName>
    </alternativeName>
</protein>
<proteinExistence type="inferred from homology"/>
<comment type="function">
    <text evidence="1">NAD-binding protein involved in the addition of a carboxymethylaminomethyl (cmnm) group at the wobble position (U34) of certain tRNAs, forming tRNA-cmnm(5)s(2)U34.</text>
</comment>
<comment type="cofactor">
    <cofactor evidence="1">
        <name>FAD</name>
        <dbReference type="ChEBI" id="CHEBI:57692"/>
    </cofactor>
</comment>
<comment type="subunit">
    <text evidence="1">Homodimer. Heterotetramer of two MnmE and two MnmG subunits.</text>
</comment>
<comment type="subcellular location">
    <subcellularLocation>
        <location evidence="1">Cytoplasm</location>
    </subcellularLocation>
</comment>
<comment type="similarity">
    <text evidence="1">Belongs to the MnmG family.</text>
</comment>
<name>MNMG_PSEP1</name>
<reference key="1">
    <citation type="submission" date="2007-05" db="EMBL/GenBank/DDBJ databases">
        <title>Complete sequence of Pseudomonas putida F1.</title>
        <authorList>
            <consortium name="US DOE Joint Genome Institute"/>
            <person name="Copeland A."/>
            <person name="Lucas S."/>
            <person name="Lapidus A."/>
            <person name="Barry K."/>
            <person name="Detter J.C."/>
            <person name="Glavina del Rio T."/>
            <person name="Hammon N."/>
            <person name="Israni S."/>
            <person name="Dalin E."/>
            <person name="Tice H."/>
            <person name="Pitluck S."/>
            <person name="Chain P."/>
            <person name="Malfatti S."/>
            <person name="Shin M."/>
            <person name="Vergez L."/>
            <person name="Schmutz J."/>
            <person name="Larimer F."/>
            <person name="Land M."/>
            <person name="Hauser L."/>
            <person name="Kyrpides N."/>
            <person name="Lykidis A."/>
            <person name="Parales R."/>
            <person name="Richardson P."/>
        </authorList>
    </citation>
    <scope>NUCLEOTIDE SEQUENCE [LARGE SCALE GENOMIC DNA]</scope>
    <source>
        <strain>ATCC 700007 / DSM 6899 / JCM 31910 / BCRC 17059 / LMG 24140 / F1</strain>
    </source>
</reference>
<evidence type="ECO:0000255" key="1">
    <source>
        <dbReference type="HAMAP-Rule" id="MF_00129"/>
    </source>
</evidence>
<dbReference type="EMBL" id="CP000712">
    <property type="protein sequence ID" value="ABQ81424.1"/>
    <property type="molecule type" value="Genomic_DNA"/>
</dbReference>
<dbReference type="SMR" id="A5WBB4"/>
<dbReference type="KEGG" id="ppf:Pput_5306"/>
<dbReference type="eggNOG" id="COG0445">
    <property type="taxonomic scope" value="Bacteria"/>
</dbReference>
<dbReference type="HOGENOM" id="CLU_007831_2_2_6"/>
<dbReference type="GO" id="GO:0005829">
    <property type="term" value="C:cytosol"/>
    <property type="evidence" value="ECO:0007669"/>
    <property type="project" value="TreeGrafter"/>
</dbReference>
<dbReference type="GO" id="GO:0050660">
    <property type="term" value="F:flavin adenine dinucleotide binding"/>
    <property type="evidence" value="ECO:0007669"/>
    <property type="project" value="UniProtKB-UniRule"/>
</dbReference>
<dbReference type="GO" id="GO:0030488">
    <property type="term" value="P:tRNA methylation"/>
    <property type="evidence" value="ECO:0007669"/>
    <property type="project" value="TreeGrafter"/>
</dbReference>
<dbReference type="GO" id="GO:0002098">
    <property type="term" value="P:tRNA wobble uridine modification"/>
    <property type="evidence" value="ECO:0007669"/>
    <property type="project" value="InterPro"/>
</dbReference>
<dbReference type="FunFam" id="1.10.10.1800:FF:000001">
    <property type="entry name" value="tRNA uridine 5-carboxymethylaminomethyl modification enzyme MnmG"/>
    <property type="match status" value="1"/>
</dbReference>
<dbReference type="FunFam" id="1.10.150.570:FF:000001">
    <property type="entry name" value="tRNA uridine 5-carboxymethylaminomethyl modification enzyme MnmG"/>
    <property type="match status" value="1"/>
</dbReference>
<dbReference type="FunFam" id="3.50.50.60:FF:000002">
    <property type="entry name" value="tRNA uridine 5-carboxymethylaminomethyl modification enzyme MnmG"/>
    <property type="match status" value="1"/>
</dbReference>
<dbReference type="FunFam" id="3.50.50.60:FF:000010">
    <property type="entry name" value="tRNA uridine 5-carboxymethylaminomethyl modification enzyme MnmG"/>
    <property type="match status" value="1"/>
</dbReference>
<dbReference type="Gene3D" id="3.50.50.60">
    <property type="entry name" value="FAD/NAD(P)-binding domain"/>
    <property type="match status" value="2"/>
</dbReference>
<dbReference type="Gene3D" id="1.10.150.570">
    <property type="entry name" value="GidA associated domain, C-terminal subdomain"/>
    <property type="match status" value="1"/>
</dbReference>
<dbReference type="Gene3D" id="1.10.10.1800">
    <property type="entry name" value="tRNA uridine 5-carboxymethylaminomethyl modification enzyme MnmG/GidA"/>
    <property type="match status" value="1"/>
</dbReference>
<dbReference type="HAMAP" id="MF_00129">
    <property type="entry name" value="MnmG_GidA"/>
    <property type="match status" value="1"/>
</dbReference>
<dbReference type="InterPro" id="IPR036188">
    <property type="entry name" value="FAD/NAD-bd_sf"/>
</dbReference>
<dbReference type="InterPro" id="IPR049312">
    <property type="entry name" value="GIDA_C_N"/>
</dbReference>
<dbReference type="InterPro" id="IPR004416">
    <property type="entry name" value="MnmG"/>
</dbReference>
<dbReference type="InterPro" id="IPR002218">
    <property type="entry name" value="MnmG-rel"/>
</dbReference>
<dbReference type="InterPro" id="IPR020595">
    <property type="entry name" value="MnmG-rel_CS"/>
</dbReference>
<dbReference type="InterPro" id="IPR026904">
    <property type="entry name" value="MnmG_C"/>
</dbReference>
<dbReference type="InterPro" id="IPR047001">
    <property type="entry name" value="MnmG_C_subdom"/>
</dbReference>
<dbReference type="InterPro" id="IPR044920">
    <property type="entry name" value="MnmG_C_subdom_sf"/>
</dbReference>
<dbReference type="InterPro" id="IPR040131">
    <property type="entry name" value="MnmG_N"/>
</dbReference>
<dbReference type="NCBIfam" id="TIGR00136">
    <property type="entry name" value="mnmG_gidA"/>
    <property type="match status" value="1"/>
</dbReference>
<dbReference type="PANTHER" id="PTHR11806">
    <property type="entry name" value="GLUCOSE INHIBITED DIVISION PROTEIN A"/>
    <property type="match status" value="1"/>
</dbReference>
<dbReference type="PANTHER" id="PTHR11806:SF0">
    <property type="entry name" value="PROTEIN MTO1 HOMOLOG, MITOCHONDRIAL"/>
    <property type="match status" value="1"/>
</dbReference>
<dbReference type="Pfam" id="PF01134">
    <property type="entry name" value="GIDA"/>
    <property type="match status" value="1"/>
</dbReference>
<dbReference type="Pfam" id="PF21680">
    <property type="entry name" value="GIDA_C_1st"/>
    <property type="match status" value="1"/>
</dbReference>
<dbReference type="Pfam" id="PF13932">
    <property type="entry name" value="SAM_GIDA_C"/>
    <property type="match status" value="1"/>
</dbReference>
<dbReference type="PRINTS" id="PR00411">
    <property type="entry name" value="PNDRDTASEI"/>
</dbReference>
<dbReference type="SMART" id="SM01228">
    <property type="entry name" value="GIDA_assoc_3"/>
    <property type="match status" value="1"/>
</dbReference>
<dbReference type="SUPFAM" id="SSF51905">
    <property type="entry name" value="FAD/NAD(P)-binding domain"/>
    <property type="match status" value="1"/>
</dbReference>
<dbReference type="PROSITE" id="PS01280">
    <property type="entry name" value="GIDA_1"/>
    <property type="match status" value="1"/>
</dbReference>
<dbReference type="PROSITE" id="PS01281">
    <property type="entry name" value="GIDA_2"/>
    <property type="match status" value="1"/>
</dbReference>
<organism>
    <name type="scientific">Pseudomonas putida (strain ATCC 700007 / DSM 6899 / JCM 31910 / BCRC 17059 / LMG 24140 / F1)</name>
    <dbReference type="NCBI Taxonomy" id="351746"/>
    <lineage>
        <taxon>Bacteria</taxon>
        <taxon>Pseudomonadati</taxon>
        <taxon>Pseudomonadota</taxon>
        <taxon>Gammaproteobacteria</taxon>
        <taxon>Pseudomonadales</taxon>
        <taxon>Pseudomonadaceae</taxon>
        <taxon>Pseudomonas</taxon>
    </lineage>
</organism>
<sequence length="630" mass="69459">MDFPSRFDVIVIGGGHAGTEAALASARMGVKTLLLTHNVETLGHMSCNPAIGGIGKSHLVKEIDALGGAMALATDKSGIQFRVLNNRKGPAVRATRAQADRAIYKAVVREILENQPNLWIFQQSCDDLIVEQDQVKGVVTQMGLRFFAESVVLTTGTFLGGLIHIGLQNHSGGRAGDPPSIALAHRMRELPLRVGRLKTGTPPRIDGRSVDFSVMTEQPGDTPIPVMSFMGNAEMHPRQVSCWITHTNARTHEIIASNLDRSPMYSGVIEGVGPRYCPSIEDKIHRFADKESHQVFIEPEGLNTHELYPNGISTSLPFDVQLELVRSIRGMENAHIVRPGYAIEYDYFDPRDLKYSLETKVIGGLFFAGQINGTTGYEEAGAQGLLAGTNAALRAQGRDSWCPRRDEAYIGVLVDDLITLGTQEPYRMFTSRAEYRLILREDNADLRLTEKGRELGLIDDLRWAAFCAKRDGIEREEQRLKSTWVRPNTEQGQAVVDKFGTPLSHEYSLLNLLARPEIDYAGLIEATGGEAIDPQVAEQVEIRTKYAGYIDRQQDEIARLRASEDTRLPVDIDYTTISGLSKEIQGKLSQTRPETLGQASRIPGVTPAAISLMLIHLKKRGAGRELEQSA</sequence>